<organism>
    <name type="scientific">Dromaius novaehollandiae</name>
    <name type="common">Emu</name>
    <dbReference type="NCBI Taxonomy" id="8790"/>
    <lineage>
        <taxon>Eukaryota</taxon>
        <taxon>Metazoa</taxon>
        <taxon>Chordata</taxon>
        <taxon>Craniata</taxon>
        <taxon>Vertebrata</taxon>
        <taxon>Euteleostomi</taxon>
        <taxon>Archelosauria</taxon>
        <taxon>Archosauria</taxon>
        <taxon>Dinosauria</taxon>
        <taxon>Saurischia</taxon>
        <taxon>Theropoda</taxon>
        <taxon>Coelurosauria</taxon>
        <taxon>Aves</taxon>
        <taxon>Palaeognathae</taxon>
        <taxon>Casuariiformes</taxon>
        <taxon>Dromaiidae</taxon>
        <taxon>Dromaius</taxon>
    </lineage>
</organism>
<name>TRFE_DRONO</name>
<accession>P85895</accession>
<comment type="function">
    <text evidence="6">Transferrins are iron binding transport proteins which can bind two Fe(3+) ions in association with the binding of an anion, usually bicarbonate. It is responsible for the transport of iron from sites of absorption and heme degradation to those of storage and utilization. Serum transferrin may also have a further role in stimulating cell proliferation.</text>
</comment>
<comment type="function">
    <text evidence="2">Ovotransferrin has a bacteriostatic function. Its concentration in avian egg is the highest concentration of any transferrin in vivo (By similarity).</text>
</comment>
<comment type="subunit">
    <text evidence="1">Monomer.</text>
</comment>
<comment type="subcellular location">
    <subcellularLocation>
        <location evidence="6">Secreted</location>
    </subcellularLocation>
</comment>
<comment type="similarity">
    <text evidence="3">Belongs to the transferrin family.</text>
</comment>
<sequence length="14" mass="1491">AAPKATVRWCTISS</sequence>
<reference evidence="6" key="1">
    <citation type="journal article" date="2010" name="J. Agric. Food Chem.">
        <title>Primary structure of potential allergenic proteins in emu (Dromaius novaehollandiae) egg white.</title>
        <authorList>
            <person name="Maehashi K."/>
            <person name="Matano M."/>
            <person name="Irisawa T."/>
            <person name="Uchino M."/>
            <person name="Itagaki Y."/>
            <person name="Takano K."/>
            <person name="Kashiwagi Y."/>
            <person name="Watanabe T."/>
        </authorList>
    </citation>
    <scope>PROTEIN SEQUENCE</scope>
    <source>
        <tissue evidence="4">Egg white</tissue>
    </source>
</reference>
<feature type="chain" id="PRO_0000347260" description="Ovotransferrin">
    <location>
        <begin position="1"/>
        <end position="14" status="greater than"/>
    </location>
</feature>
<feature type="domain" description="Transferrin-like" evidence="3">
    <location>
        <begin position="7"/>
        <end position="14" status="greater than"/>
    </location>
</feature>
<feature type="disulfide bond" evidence="2 3">
    <location>
        <begin position="10"/>
        <end status="unknown"/>
    </location>
</feature>
<feature type="non-terminal residue" evidence="5">
    <location>
        <position position="14"/>
    </location>
</feature>
<keyword id="KW-0903">Direct protein sequencing</keyword>
<keyword id="KW-1015">Disulfide bond</keyword>
<keyword id="KW-0406">Ion transport</keyword>
<keyword id="KW-0408">Iron</keyword>
<keyword id="KW-0410">Iron transport</keyword>
<keyword id="KW-0479">Metal-binding</keyword>
<keyword id="KW-0964">Secreted</keyword>
<keyword id="KW-0813">Transport</keyword>
<evidence type="ECO:0000250" key="1">
    <source>
        <dbReference type="UniProtKB" id="P02787"/>
    </source>
</evidence>
<evidence type="ECO:0000250" key="2">
    <source>
        <dbReference type="UniProtKB" id="P56410"/>
    </source>
</evidence>
<evidence type="ECO:0000255" key="3">
    <source>
        <dbReference type="PROSITE-ProRule" id="PRU00741"/>
    </source>
</evidence>
<evidence type="ECO:0000269" key="4">
    <source>
    </source>
</evidence>
<evidence type="ECO:0000303" key="5">
    <source>
    </source>
</evidence>
<evidence type="ECO:0000305" key="6"/>
<protein>
    <recommendedName>
        <fullName evidence="5">Ovotransferrin</fullName>
        <shortName>OVT</shortName>
    </recommendedName>
</protein>
<proteinExistence type="evidence at protein level"/>
<dbReference type="Proteomes" id="UP000694423">
    <property type="component" value="Unplaced"/>
</dbReference>
<dbReference type="GO" id="GO:0005576">
    <property type="term" value="C:extracellular region"/>
    <property type="evidence" value="ECO:0007669"/>
    <property type="project" value="UniProtKB-SubCell"/>
</dbReference>
<dbReference type="GO" id="GO:0046872">
    <property type="term" value="F:metal ion binding"/>
    <property type="evidence" value="ECO:0007669"/>
    <property type="project" value="UniProtKB-KW"/>
</dbReference>
<dbReference type="GO" id="GO:0006826">
    <property type="term" value="P:iron ion transport"/>
    <property type="evidence" value="ECO:0007669"/>
    <property type="project" value="UniProtKB-KW"/>
</dbReference>